<sequence>MVIMGNELQLENKILKGTTTVGIKVNDGVVLAADRRASAGFFVANKMVRKVLYITDKIGITTAGSVADLQFIYDVLKNIYHYNSITKYGPISIKGIATRLANVLSATKYFPYIVQILIGGYDDQPRLFNLDYLGDITEENYVATGSGSPVAMGVLEDEYNPKMTLDEAADLAKRAVFSAIKRDSFTGTGVIVAKIHSKGHEELEFYLNKKV</sequence>
<protein>
    <recommendedName>
        <fullName evidence="1">Proteasome subunit beta 1</fullName>
        <ecNumber evidence="1">3.4.25.1</ecNumber>
    </recommendedName>
    <alternativeName>
        <fullName evidence="1">20S proteasome beta subunit 1</fullName>
    </alternativeName>
    <alternativeName>
        <fullName evidence="1">Proteasome core protein PsmB 1</fullName>
    </alternativeName>
</protein>
<dbReference type="EC" id="3.4.25.1" evidence="1"/>
<dbReference type="EMBL" id="CP001402">
    <property type="protein sequence ID" value="ACR41974.1"/>
    <property type="molecule type" value="Genomic_DNA"/>
</dbReference>
<dbReference type="SMR" id="C4KHB0"/>
<dbReference type="MEROPS" id="T01.002"/>
<dbReference type="KEGG" id="sid:M164_1368"/>
<dbReference type="HOGENOM" id="CLU_035750_7_2_2"/>
<dbReference type="Proteomes" id="UP000001479">
    <property type="component" value="Chromosome"/>
</dbReference>
<dbReference type="GO" id="GO:0005737">
    <property type="term" value="C:cytoplasm"/>
    <property type="evidence" value="ECO:0007669"/>
    <property type="project" value="UniProtKB-SubCell"/>
</dbReference>
<dbReference type="GO" id="GO:0019774">
    <property type="term" value="C:proteasome core complex, beta-subunit complex"/>
    <property type="evidence" value="ECO:0007669"/>
    <property type="project" value="UniProtKB-UniRule"/>
</dbReference>
<dbReference type="GO" id="GO:0004298">
    <property type="term" value="F:threonine-type endopeptidase activity"/>
    <property type="evidence" value="ECO:0007669"/>
    <property type="project" value="UniProtKB-UniRule"/>
</dbReference>
<dbReference type="GO" id="GO:0010498">
    <property type="term" value="P:proteasomal protein catabolic process"/>
    <property type="evidence" value="ECO:0007669"/>
    <property type="project" value="UniProtKB-UniRule"/>
</dbReference>
<dbReference type="CDD" id="cd03764">
    <property type="entry name" value="proteasome_beta_archeal"/>
    <property type="match status" value="1"/>
</dbReference>
<dbReference type="FunFam" id="3.60.20.10:FF:000049">
    <property type="entry name" value="Proteasome subunit beta"/>
    <property type="match status" value="1"/>
</dbReference>
<dbReference type="Gene3D" id="3.60.20.10">
    <property type="entry name" value="Glutamine Phosphoribosylpyrophosphate, subunit 1, domain 1"/>
    <property type="match status" value="1"/>
</dbReference>
<dbReference type="HAMAP" id="MF_02113_A">
    <property type="entry name" value="Proteasome_B_A"/>
    <property type="match status" value="1"/>
</dbReference>
<dbReference type="InterPro" id="IPR029055">
    <property type="entry name" value="Ntn_hydrolases_N"/>
</dbReference>
<dbReference type="InterPro" id="IPR019983">
    <property type="entry name" value="Pept_T1A_Psome_bsu_arc"/>
</dbReference>
<dbReference type="InterPro" id="IPR000243">
    <property type="entry name" value="Pept_T1A_subB"/>
</dbReference>
<dbReference type="InterPro" id="IPR016050">
    <property type="entry name" value="Proteasome_bsu_CS"/>
</dbReference>
<dbReference type="InterPro" id="IPR001353">
    <property type="entry name" value="Proteasome_sua/b"/>
</dbReference>
<dbReference type="InterPro" id="IPR023333">
    <property type="entry name" value="Proteasome_suB-type"/>
</dbReference>
<dbReference type="NCBIfam" id="TIGR03634">
    <property type="entry name" value="arc_protsome_B"/>
    <property type="match status" value="1"/>
</dbReference>
<dbReference type="PANTHER" id="PTHR32194:SF0">
    <property type="entry name" value="ATP-DEPENDENT PROTEASE SUBUNIT HSLV"/>
    <property type="match status" value="1"/>
</dbReference>
<dbReference type="PANTHER" id="PTHR32194">
    <property type="entry name" value="METALLOPROTEASE TLDD"/>
    <property type="match status" value="1"/>
</dbReference>
<dbReference type="Pfam" id="PF00227">
    <property type="entry name" value="Proteasome"/>
    <property type="match status" value="1"/>
</dbReference>
<dbReference type="PRINTS" id="PR00141">
    <property type="entry name" value="PROTEASOME"/>
</dbReference>
<dbReference type="SUPFAM" id="SSF56235">
    <property type="entry name" value="N-terminal nucleophile aminohydrolases (Ntn hydrolases)"/>
    <property type="match status" value="1"/>
</dbReference>
<dbReference type="PROSITE" id="PS00854">
    <property type="entry name" value="PROTEASOME_BETA_1"/>
    <property type="match status" value="1"/>
</dbReference>
<dbReference type="PROSITE" id="PS51476">
    <property type="entry name" value="PROTEASOME_BETA_2"/>
    <property type="match status" value="1"/>
</dbReference>
<evidence type="ECO:0000255" key="1">
    <source>
        <dbReference type="HAMAP-Rule" id="MF_02113"/>
    </source>
</evidence>
<feature type="propeptide" id="PRO_0000397442" description="Removed in mature form; by autocatalysis" evidence="1">
    <location>
        <begin position="1"/>
        <end position="17"/>
    </location>
</feature>
<feature type="chain" id="PRO_0000397443" description="Proteasome subunit beta 1">
    <location>
        <begin position="18"/>
        <end position="211"/>
    </location>
</feature>
<feature type="active site" description="Nucleophile" evidence="1">
    <location>
        <position position="18"/>
    </location>
</feature>
<organism>
    <name type="scientific">Saccharolobus islandicus (strain M.16.4 / Kamchatka #3)</name>
    <name type="common">Sulfolobus islandicus</name>
    <dbReference type="NCBI Taxonomy" id="426118"/>
    <lineage>
        <taxon>Archaea</taxon>
        <taxon>Thermoproteota</taxon>
        <taxon>Thermoprotei</taxon>
        <taxon>Sulfolobales</taxon>
        <taxon>Sulfolobaceae</taxon>
        <taxon>Saccharolobus</taxon>
    </lineage>
</organism>
<reference key="1">
    <citation type="journal article" date="2009" name="Proc. Natl. Acad. Sci. U.S.A.">
        <title>Biogeography of the Sulfolobus islandicus pan-genome.</title>
        <authorList>
            <person name="Reno M.L."/>
            <person name="Held N.L."/>
            <person name="Fields C.J."/>
            <person name="Burke P.V."/>
            <person name="Whitaker R.J."/>
        </authorList>
    </citation>
    <scope>NUCLEOTIDE SEQUENCE [LARGE SCALE GENOMIC DNA]</scope>
    <source>
        <strain>M.16.4 / Kamchatka #3</strain>
    </source>
</reference>
<name>PSB1_SACI6</name>
<proteinExistence type="inferred from homology"/>
<accession>C4KHB0</accession>
<gene>
    <name evidence="1" type="primary">psmB1</name>
    <name type="ordered locus">M164_1368</name>
</gene>
<comment type="function">
    <text evidence="1">Component of the proteasome core, a large protease complex with broad specificity involved in protein degradation.</text>
</comment>
<comment type="catalytic activity">
    <reaction evidence="1">
        <text>Cleavage of peptide bonds with very broad specificity.</text>
        <dbReference type="EC" id="3.4.25.1"/>
    </reaction>
</comment>
<comment type="activity regulation">
    <text evidence="1">The formation of the proteasomal ATPase PAN-20S proteasome complex, via the docking of the C-termini of PAN into the intersubunit pockets in the alpha-rings, triggers opening of the gate for substrate entry. Interconversion between the open-gate and close-gate conformations leads to a dynamic regulation of the 20S proteasome proteolysis activity.</text>
</comment>
<comment type="subunit">
    <text evidence="1">The 20S proteasome core is composed of 14 alpha and 14 beta subunits that assemble into four stacked heptameric rings, resulting in a barrel-shaped structure. The two inner rings, each composed of seven catalytic beta subunits, are sandwiched by two outer rings, each composed of seven alpha subunits. The catalytic chamber with the active sites is on the inside of the barrel. Has a gated structure, the ends of the cylinder being occluded by the N-termini of the alpha-subunits. Is capped at one or both ends by the proteasome regulatory ATPase, PAN.</text>
</comment>
<comment type="subcellular location">
    <subcellularLocation>
        <location evidence="1">Cytoplasm</location>
    </subcellularLocation>
</comment>
<comment type="similarity">
    <text evidence="1">Belongs to the peptidase T1B family.</text>
</comment>
<keyword id="KW-0068">Autocatalytic cleavage</keyword>
<keyword id="KW-0963">Cytoplasm</keyword>
<keyword id="KW-0378">Hydrolase</keyword>
<keyword id="KW-0645">Protease</keyword>
<keyword id="KW-0647">Proteasome</keyword>
<keyword id="KW-0888">Threonine protease</keyword>
<keyword id="KW-0865">Zymogen</keyword>